<keyword id="KW-0002">3D-structure</keyword>
<keyword id="KW-0378">Hydrolase</keyword>
<keyword id="KW-1185">Reference proteome</keyword>
<keyword id="KW-0719">Serine esterase</keyword>
<proteinExistence type="evidence at protein level"/>
<dbReference type="EC" id="3.1.-.-"/>
<dbReference type="EMBL" id="U00096">
    <property type="protein sequence ID" value="AAC73780.1"/>
    <property type="molecule type" value="Genomic_DNA"/>
</dbReference>
<dbReference type="EMBL" id="AP009048">
    <property type="protein sequence ID" value="BAA35335.1"/>
    <property type="molecule type" value="Genomic_DNA"/>
</dbReference>
<dbReference type="PIR" id="E64803">
    <property type="entry name" value="E64803"/>
</dbReference>
<dbReference type="RefSeq" id="NP_415212.1">
    <property type="nucleotide sequence ID" value="NC_000913.3"/>
</dbReference>
<dbReference type="RefSeq" id="WP_000773288.1">
    <property type="nucleotide sequence ID" value="NZ_SSZK01000045.1"/>
</dbReference>
<dbReference type="PDB" id="3BF7">
    <property type="method" value="X-ray"/>
    <property type="resolution" value="1.10 A"/>
    <property type="chains" value="A/B=1-254"/>
</dbReference>
<dbReference type="PDB" id="3BF8">
    <property type="method" value="X-ray"/>
    <property type="resolution" value="1.68 A"/>
    <property type="chains" value="A/B=1-254"/>
</dbReference>
<dbReference type="PDBsum" id="3BF7"/>
<dbReference type="PDBsum" id="3BF8"/>
<dbReference type="SMR" id="P75736"/>
<dbReference type="BioGRID" id="4261906">
    <property type="interactions" value="11"/>
</dbReference>
<dbReference type="FunCoup" id="P75736">
    <property type="interactions" value="650"/>
</dbReference>
<dbReference type="IntAct" id="P75736">
    <property type="interactions" value="4"/>
</dbReference>
<dbReference type="STRING" id="511145.b0686"/>
<dbReference type="ESTHER" id="ecoli-ybff">
    <property type="family name" value="ABHD11-Acetyl_transferase"/>
</dbReference>
<dbReference type="jPOST" id="P75736"/>
<dbReference type="PaxDb" id="511145-b0686"/>
<dbReference type="EnsemblBacteria" id="AAC73780">
    <property type="protein sequence ID" value="AAC73780"/>
    <property type="gene ID" value="b0686"/>
</dbReference>
<dbReference type="GeneID" id="945288"/>
<dbReference type="KEGG" id="ecj:JW0673"/>
<dbReference type="KEGG" id="eco:b0686"/>
<dbReference type="KEGG" id="ecoc:C3026_03420"/>
<dbReference type="PATRIC" id="fig|1411691.4.peg.1590"/>
<dbReference type="EchoBASE" id="EB1725"/>
<dbReference type="eggNOG" id="COG0596">
    <property type="taxonomic scope" value="Bacteria"/>
</dbReference>
<dbReference type="HOGENOM" id="CLU_020336_53_1_6"/>
<dbReference type="InParanoid" id="P75736"/>
<dbReference type="OMA" id="FLGMSDN"/>
<dbReference type="OrthoDB" id="9808398at2"/>
<dbReference type="PhylomeDB" id="P75736"/>
<dbReference type="BioCyc" id="EcoCyc:EG11776-MONOMER"/>
<dbReference type="BRENDA" id="3.1.2.2">
    <property type="organism ID" value="2026"/>
</dbReference>
<dbReference type="EvolutionaryTrace" id="P75736"/>
<dbReference type="PRO" id="PR:P75736"/>
<dbReference type="Proteomes" id="UP000000625">
    <property type="component" value="Chromosome"/>
</dbReference>
<dbReference type="GO" id="GO:0005829">
    <property type="term" value="C:cytosol"/>
    <property type="evidence" value="ECO:0000314"/>
    <property type="project" value="EcoCyc"/>
</dbReference>
<dbReference type="GO" id="GO:0106435">
    <property type="term" value="F:carboxylesterase activity"/>
    <property type="evidence" value="ECO:0000314"/>
    <property type="project" value="EcoCyc"/>
</dbReference>
<dbReference type="GO" id="GO:0016790">
    <property type="term" value="F:thiolester hydrolase activity"/>
    <property type="evidence" value="ECO:0000314"/>
    <property type="project" value="EcoCyc"/>
</dbReference>
<dbReference type="FunFam" id="3.40.50.1820:FF:000039">
    <property type="entry name" value="Esterase ybfF"/>
    <property type="match status" value="1"/>
</dbReference>
<dbReference type="Gene3D" id="3.40.50.1820">
    <property type="entry name" value="alpha/beta hydrolase"/>
    <property type="match status" value="1"/>
</dbReference>
<dbReference type="InterPro" id="IPR000073">
    <property type="entry name" value="AB_hydrolase_1"/>
</dbReference>
<dbReference type="InterPro" id="IPR029058">
    <property type="entry name" value="AB_hydrolase_fold"/>
</dbReference>
<dbReference type="NCBIfam" id="NF007954">
    <property type="entry name" value="PRK10673.1"/>
    <property type="match status" value="1"/>
</dbReference>
<dbReference type="PANTHER" id="PTHR46118">
    <property type="entry name" value="PROTEIN ABHD11"/>
    <property type="match status" value="1"/>
</dbReference>
<dbReference type="PANTHER" id="PTHR46118:SF4">
    <property type="entry name" value="PROTEIN ABHD11"/>
    <property type="match status" value="1"/>
</dbReference>
<dbReference type="Pfam" id="PF12697">
    <property type="entry name" value="Abhydrolase_6"/>
    <property type="match status" value="1"/>
</dbReference>
<dbReference type="SUPFAM" id="SSF53474">
    <property type="entry name" value="alpha/beta-Hydrolases"/>
    <property type="match status" value="1"/>
</dbReference>
<gene>
    <name type="primary">ybfF</name>
    <name type="ordered locus">b0686</name>
    <name type="ordered locus">JW0673</name>
</gene>
<sequence length="254" mass="28437">MKLNIRAQTAQNQHNNSPIVLVHGLFGSLDNLGVLARDLVNDHNIIQVDMRNHGLSPRDPVMNYPAMAQDLVDTLDAQQIDKATFIGHSMGGKAVMALTALASDRIDKLVAIDIAPVDYHVRRHDEIFAAINAVSESDAQTRQQAAAIMRQHLNEEGVIQFLLKSFVDGEWRFNVPVLWDQYPHIVGWEKIPAWDHPALFIPGGNSPYVSEQYRDDLLAQFPQARAHVIAGAGHWVHAEKPDAVLRAIRRYLND</sequence>
<protein>
    <recommendedName>
        <fullName>Esterase YbfF</fullName>
        <ecNumber>3.1.-.-</ecNumber>
    </recommendedName>
</protein>
<evidence type="ECO:0000250" key="1"/>
<evidence type="ECO:0000269" key="2">
    <source>
    </source>
</evidence>
<evidence type="ECO:0000305" key="3"/>
<evidence type="ECO:0007829" key="4">
    <source>
        <dbReference type="PDB" id="3BF7"/>
    </source>
</evidence>
<name>YBFF_ECOLI</name>
<reference key="1">
    <citation type="journal article" date="1996" name="DNA Res.">
        <title>A 718-kb DNA sequence of the Escherichia coli K-12 genome corresponding to the 12.7-28.0 min region on the linkage map.</title>
        <authorList>
            <person name="Oshima T."/>
            <person name="Aiba H."/>
            <person name="Baba T."/>
            <person name="Fujita K."/>
            <person name="Hayashi K."/>
            <person name="Honjo A."/>
            <person name="Ikemoto K."/>
            <person name="Inada T."/>
            <person name="Itoh T."/>
            <person name="Kajihara M."/>
            <person name="Kanai K."/>
            <person name="Kashimoto K."/>
            <person name="Kimura S."/>
            <person name="Kitagawa M."/>
            <person name="Makino K."/>
            <person name="Masuda S."/>
            <person name="Miki T."/>
            <person name="Mizobuchi K."/>
            <person name="Mori H."/>
            <person name="Motomura K."/>
            <person name="Nakamura Y."/>
            <person name="Nashimoto H."/>
            <person name="Nishio Y."/>
            <person name="Saito N."/>
            <person name="Sampei G."/>
            <person name="Seki Y."/>
            <person name="Tagami H."/>
            <person name="Takemoto K."/>
            <person name="Wada C."/>
            <person name="Yamamoto Y."/>
            <person name="Yano M."/>
            <person name="Horiuchi T."/>
        </authorList>
    </citation>
    <scope>NUCLEOTIDE SEQUENCE [LARGE SCALE GENOMIC DNA]</scope>
    <source>
        <strain>K12 / W3110 / ATCC 27325 / DSM 5911</strain>
    </source>
</reference>
<reference key="2">
    <citation type="journal article" date="1997" name="Science">
        <title>The complete genome sequence of Escherichia coli K-12.</title>
        <authorList>
            <person name="Blattner F.R."/>
            <person name="Plunkett G. III"/>
            <person name="Bloch C.A."/>
            <person name="Perna N.T."/>
            <person name="Burland V."/>
            <person name="Riley M."/>
            <person name="Collado-Vides J."/>
            <person name="Glasner J.D."/>
            <person name="Rode C.K."/>
            <person name="Mayhew G.F."/>
            <person name="Gregor J."/>
            <person name="Davis N.W."/>
            <person name="Kirkpatrick H.A."/>
            <person name="Goeden M.A."/>
            <person name="Rose D.J."/>
            <person name="Mau B."/>
            <person name="Shao Y."/>
        </authorList>
    </citation>
    <scope>NUCLEOTIDE SEQUENCE [LARGE SCALE GENOMIC DNA]</scope>
    <source>
        <strain>K12 / MG1655 / ATCC 47076</strain>
    </source>
</reference>
<reference key="3">
    <citation type="journal article" date="2006" name="Mol. Syst. Biol.">
        <title>Highly accurate genome sequences of Escherichia coli K-12 strains MG1655 and W3110.</title>
        <authorList>
            <person name="Hayashi K."/>
            <person name="Morooka N."/>
            <person name="Yamamoto Y."/>
            <person name="Fujita K."/>
            <person name="Isono K."/>
            <person name="Choi S."/>
            <person name="Ohtsubo E."/>
            <person name="Baba T."/>
            <person name="Wanner B.L."/>
            <person name="Mori H."/>
            <person name="Horiuchi T."/>
        </authorList>
    </citation>
    <scope>NUCLEOTIDE SEQUENCE [LARGE SCALE GENOMIC DNA]</scope>
    <source>
        <strain>K12 / W3110 / ATCC 27325 / DSM 5911</strain>
    </source>
</reference>
<reference key="4">
    <citation type="journal article" date="1999" name="Electrophoresis">
        <title>Enrichment of low abundance proteins of Escherichia coli by hydroxyapatite chromatography.</title>
        <authorList>
            <person name="Fountoulakis M."/>
            <person name="Takacs M.-F."/>
            <person name="Berndt P."/>
            <person name="Langen H."/>
            <person name="Takacs B."/>
        </authorList>
    </citation>
    <scope>IDENTIFICATION BY MASS SPECTROMETRY</scope>
    <source>
        <strain>B / BL21</strain>
    </source>
</reference>
<reference key="5">
    <citation type="journal article" date="2005" name="FEMS Microbiol. Rev.">
        <title>Enzyme genomics: application of general enzymatic screens to discover new enzymes.</title>
        <authorList>
            <person name="Kuznetsova E."/>
            <person name="Proudfoot M."/>
            <person name="Sanders S.A."/>
            <person name="Reinking J."/>
            <person name="Savchenko A."/>
            <person name="Arrowsmith C.H."/>
            <person name="Edwards A.M."/>
            <person name="Yakunin A.F."/>
        </authorList>
    </citation>
    <scope>FUNCTION</scope>
</reference>
<organism>
    <name type="scientific">Escherichia coli (strain K12)</name>
    <dbReference type="NCBI Taxonomy" id="83333"/>
    <lineage>
        <taxon>Bacteria</taxon>
        <taxon>Pseudomonadati</taxon>
        <taxon>Pseudomonadota</taxon>
        <taxon>Gammaproteobacteria</taxon>
        <taxon>Enterobacterales</taxon>
        <taxon>Enterobacteriaceae</taxon>
        <taxon>Escherichia</taxon>
    </lineage>
</organism>
<feature type="chain" id="PRO_0000207081" description="Esterase YbfF">
    <location>
        <begin position="1"/>
        <end position="254"/>
    </location>
</feature>
<feature type="active site" evidence="1">
    <location>
        <position position="89"/>
    </location>
</feature>
<feature type="active site" evidence="1">
    <location>
        <position position="234"/>
    </location>
</feature>
<feature type="strand" evidence="4">
    <location>
        <begin position="5"/>
        <end position="8"/>
    </location>
</feature>
<feature type="strand" evidence="4">
    <location>
        <begin position="19"/>
        <end position="22"/>
    </location>
</feature>
<feature type="turn" evidence="4">
    <location>
        <begin position="29"/>
        <end position="32"/>
    </location>
</feature>
<feature type="helix" evidence="4">
    <location>
        <begin position="33"/>
        <end position="39"/>
    </location>
</feature>
<feature type="turn" evidence="4">
    <location>
        <begin position="40"/>
        <end position="42"/>
    </location>
</feature>
<feature type="strand" evidence="4">
    <location>
        <begin position="45"/>
        <end position="48"/>
    </location>
</feature>
<feature type="helix" evidence="4">
    <location>
        <begin position="64"/>
        <end position="78"/>
    </location>
</feature>
<feature type="strand" evidence="4">
    <location>
        <begin position="83"/>
        <end position="88"/>
    </location>
</feature>
<feature type="helix" evidence="4">
    <location>
        <begin position="90"/>
        <end position="101"/>
    </location>
</feature>
<feature type="helix" evidence="4">
    <location>
        <begin position="103"/>
        <end position="105"/>
    </location>
</feature>
<feature type="strand" evidence="4">
    <location>
        <begin position="106"/>
        <end position="113"/>
    </location>
</feature>
<feature type="helix" evidence="4">
    <location>
        <begin position="125"/>
        <end position="136"/>
    </location>
</feature>
<feature type="helix" evidence="4">
    <location>
        <begin position="142"/>
        <end position="149"/>
    </location>
</feature>
<feature type="turn" evidence="4">
    <location>
        <begin position="150"/>
        <end position="152"/>
    </location>
</feature>
<feature type="helix" evidence="4">
    <location>
        <begin position="156"/>
        <end position="163"/>
    </location>
</feature>
<feature type="strand" evidence="4">
    <location>
        <begin position="170"/>
        <end position="173"/>
    </location>
</feature>
<feature type="helix" evidence="4">
    <location>
        <begin position="175"/>
        <end position="180"/>
    </location>
</feature>
<feature type="helix" evidence="4">
    <location>
        <begin position="182"/>
        <end position="186"/>
    </location>
</feature>
<feature type="strand" evidence="4">
    <location>
        <begin position="198"/>
        <end position="201"/>
    </location>
</feature>
<feature type="helix" evidence="4">
    <location>
        <begin position="211"/>
        <end position="213"/>
    </location>
</feature>
<feature type="helix" evidence="4">
    <location>
        <begin position="214"/>
        <end position="220"/>
    </location>
</feature>
<feature type="strand" evidence="4">
    <location>
        <begin position="224"/>
        <end position="226"/>
    </location>
</feature>
<feature type="helix" evidence="4">
    <location>
        <begin position="236"/>
        <end position="239"/>
    </location>
</feature>
<feature type="helix" evidence="4">
    <location>
        <begin position="241"/>
        <end position="253"/>
    </location>
</feature>
<accession>P75736</accession>
<comment type="function">
    <text evidence="2">Displays esterase activity toward palmitoyl-CoA, malonyl-CoA and pNP-butyrate.</text>
</comment>
<comment type="similarity">
    <text evidence="3">Belongs to the DmpD/TodF/XylF esterase family.</text>
</comment>